<gene>
    <name evidence="1" type="primary">murC</name>
    <name type="ordered locus">SPO1196</name>
</gene>
<proteinExistence type="inferred from homology"/>
<protein>
    <recommendedName>
        <fullName evidence="1">UDP-N-acetylmuramate--L-alanine ligase</fullName>
        <ecNumber evidence="1">6.3.2.8</ecNumber>
    </recommendedName>
    <alternativeName>
        <fullName evidence="1">UDP-N-acetylmuramoyl-L-alanine synthetase</fullName>
    </alternativeName>
</protein>
<name>MURC_RUEPO</name>
<organism>
    <name type="scientific">Ruegeria pomeroyi (strain ATCC 700808 / DSM 15171 / DSS-3)</name>
    <name type="common">Silicibacter pomeroyi</name>
    <dbReference type="NCBI Taxonomy" id="246200"/>
    <lineage>
        <taxon>Bacteria</taxon>
        <taxon>Pseudomonadati</taxon>
        <taxon>Pseudomonadota</taxon>
        <taxon>Alphaproteobacteria</taxon>
        <taxon>Rhodobacterales</taxon>
        <taxon>Roseobacteraceae</taxon>
        <taxon>Ruegeria</taxon>
    </lineage>
</organism>
<accession>Q5LU62</accession>
<keyword id="KW-0067">ATP-binding</keyword>
<keyword id="KW-0131">Cell cycle</keyword>
<keyword id="KW-0132">Cell division</keyword>
<keyword id="KW-0133">Cell shape</keyword>
<keyword id="KW-0961">Cell wall biogenesis/degradation</keyword>
<keyword id="KW-0963">Cytoplasm</keyword>
<keyword id="KW-0436">Ligase</keyword>
<keyword id="KW-0547">Nucleotide-binding</keyword>
<keyword id="KW-0573">Peptidoglycan synthesis</keyword>
<keyword id="KW-1185">Reference proteome</keyword>
<reference key="1">
    <citation type="journal article" date="2004" name="Nature">
        <title>Genome sequence of Silicibacter pomeroyi reveals adaptations to the marine environment.</title>
        <authorList>
            <person name="Moran M.A."/>
            <person name="Buchan A."/>
            <person name="Gonzalez J.M."/>
            <person name="Heidelberg J.F."/>
            <person name="Whitman W.B."/>
            <person name="Kiene R.P."/>
            <person name="Henriksen J.R."/>
            <person name="King G.M."/>
            <person name="Belas R."/>
            <person name="Fuqua C."/>
            <person name="Brinkac L.M."/>
            <person name="Lewis M."/>
            <person name="Johri S."/>
            <person name="Weaver B."/>
            <person name="Pai G."/>
            <person name="Eisen J.A."/>
            <person name="Rahe E."/>
            <person name="Sheldon W.M."/>
            <person name="Ye W."/>
            <person name="Miller T.R."/>
            <person name="Carlton J."/>
            <person name="Rasko D.A."/>
            <person name="Paulsen I.T."/>
            <person name="Ren Q."/>
            <person name="Daugherty S.C."/>
            <person name="DeBoy R.T."/>
            <person name="Dodson R.J."/>
            <person name="Durkin A.S."/>
            <person name="Madupu R."/>
            <person name="Nelson W.C."/>
            <person name="Sullivan S.A."/>
            <person name="Rosovitz M.J."/>
            <person name="Haft D.H."/>
            <person name="Selengut J."/>
            <person name="Ward N."/>
        </authorList>
    </citation>
    <scope>NUCLEOTIDE SEQUENCE [LARGE SCALE GENOMIC DNA]</scope>
    <source>
        <strain>ATCC 700808 / DSM 15171 / DSS-3</strain>
    </source>
</reference>
<reference key="2">
    <citation type="journal article" date="2014" name="Stand. Genomic Sci.">
        <title>An updated genome annotation for the model marine bacterium Ruegeria pomeroyi DSS-3.</title>
        <authorList>
            <person name="Rivers A.R."/>
            <person name="Smith C.B."/>
            <person name="Moran M.A."/>
        </authorList>
    </citation>
    <scope>GENOME REANNOTATION</scope>
    <source>
        <strain>ATCC 700808 / DSM 15171 / DSS-3</strain>
    </source>
</reference>
<dbReference type="EC" id="6.3.2.8" evidence="1"/>
<dbReference type="EMBL" id="CP000031">
    <property type="protein sequence ID" value="AAV94492.1"/>
    <property type="molecule type" value="Genomic_DNA"/>
</dbReference>
<dbReference type="RefSeq" id="WP_011046939.1">
    <property type="nucleotide sequence ID" value="NC_003911.12"/>
</dbReference>
<dbReference type="SMR" id="Q5LU62"/>
<dbReference type="STRING" id="246200.SPO1196"/>
<dbReference type="PaxDb" id="246200-SPO1196"/>
<dbReference type="KEGG" id="sil:SPO1196"/>
<dbReference type="eggNOG" id="COG0773">
    <property type="taxonomic scope" value="Bacteria"/>
</dbReference>
<dbReference type="HOGENOM" id="CLU_028104_2_2_5"/>
<dbReference type="OrthoDB" id="9804126at2"/>
<dbReference type="UniPathway" id="UPA00219"/>
<dbReference type="Proteomes" id="UP000001023">
    <property type="component" value="Chromosome"/>
</dbReference>
<dbReference type="GO" id="GO:0005737">
    <property type="term" value="C:cytoplasm"/>
    <property type="evidence" value="ECO:0007669"/>
    <property type="project" value="UniProtKB-SubCell"/>
</dbReference>
<dbReference type="GO" id="GO:0005524">
    <property type="term" value="F:ATP binding"/>
    <property type="evidence" value="ECO:0007669"/>
    <property type="project" value="UniProtKB-UniRule"/>
</dbReference>
<dbReference type="GO" id="GO:0008763">
    <property type="term" value="F:UDP-N-acetylmuramate-L-alanine ligase activity"/>
    <property type="evidence" value="ECO:0007669"/>
    <property type="project" value="UniProtKB-UniRule"/>
</dbReference>
<dbReference type="GO" id="GO:0051301">
    <property type="term" value="P:cell division"/>
    <property type="evidence" value="ECO:0007669"/>
    <property type="project" value="UniProtKB-KW"/>
</dbReference>
<dbReference type="GO" id="GO:0071555">
    <property type="term" value="P:cell wall organization"/>
    <property type="evidence" value="ECO:0007669"/>
    <property type="project" value="UniProtKB-KW"/>
</dbReference>
<dbReference type="GO" id="GO:0009252">
    <property type="term" value="P:peptidoglycan biosynthetic process"/>
    <property type="evidence" value="ECO:0007669"/>
    <property type="project" value="UniProtKB-UniRule"/>
</dbReference>
<dbReference type="GO" id="GO:0008360">
    <property type="term" value="P:regulation of cell shape"/>
    <property type="evidence" value="ECO:0007669"/>
    <property type="project" value="UniProtKB-KW"/>
</dbReference>
<dbReference type="Gene3D" id="3.90.190.20">
    <property type="entry name" value="Mur ligase, C-terminal domain"/>
    <property type="match status" value="1"/>
</dbReference>
<dbReference type="Gene3D" id="3.40.1190.10">
    <property type="entry name" value="Mur-like, catalytic domain"/>
    <property type="match status" value="1"/>
</dbReference>
<dbReference type="Gene3D" id="3.40.50.720">
    <property type="entry name" value="NAD(P)-binding Rossmann-like Domain"/>
    <property type="match status" value="1"/>
</dbReference>
<dbReference type="HAMAP" id="MF_00046">
    <property type="entry name" value="MurC"/>
    <property type="match status" value="1"/>
</dbReference>
<dbReference type="InterPro" id="IPR036565">
    <property type="entry name" value="Mur-like_cat_sf"/>
</dbReference>
<dbReference type="InterPro" id="IPR004101">
    <property type="entry name" value="Mur_ligase_C"/>
</dbReference>
<dbReference type="InterPro" id="IPR036615">
    <property type="entry name" value="Mur_ligase_C_dom_sf"/>
</dbReference>
<dbReference type="InterPro" id="IPR013221">
    <property type="entry name" value="Mur_ligase_cen"/>
</dbReference>
<dbReference type="InterPro" id="IPR000713">
    <property type="entry name" value="Mur_ligase_N"/>
</dbReference>
<dbReference type="InterPro" id="IPR050061">
    <property type="entry name" value="MurCDEF_pg_biosynth"/>
</dbReference>
<dbReference type="InterPro" id="IPR005758">
    <property type="entry name" value="UDP-N-AcMur_Ala_ligase_MurC"/>
</dbReference>
<dbReference type="NCBIfam" id="TIGR01082">
    <property type="entry name" value="murC"/>
    <property type="match status" value="1"/>
</dbReference>
<dbReference type="PANTHER" id="PTHR43445:SF3">
    <property type="entry name" value="UDP-N-ACETYLMURAMATE--L-ALANINE LIGASE"/>
    <property type="match status" value="1"/>
</dbReference>
<dbReference type="PANTHER" id="PTHR43445">
    <property type="entry name" value="UDP-N-ACETYLMURAMATE--L-ALANINE LIGASE-RELATED"/>
    <property type="match status" value="1"/>
</dbReference>
<dbReference type="Pfam" id="PF01225">
    <property type="entry name" value="Mur_ligase"/>
    <property type="match status" value="1"/>
</dbReference>
<dbReference type="Pfam" id="PF02875">
    <property type="entry name" value="Mur_ligase_C"/>
    <property type="match status" value="1"/>
</dbReference>
<dbReference type="Pfam" id="PF08245">
    <property type="entry name" value="Mur_ligase_M"/>
    <property type="match status" value="1"/>
</dbReference>
<dbReference type="SUPFAM" id="SSF51984">
    <property type="entry name" value="MurCD N-terminal domain"/>
    <property type="match status" value="1"/>
</dbReference>
<dbReference type="SUPFAM" id="SSF53623">
    <property type="entry name" value="MurD-like peptide ligases, catalytic domain"/>
    <property type="match status" value="1"/>
</dbReference>
<dbReference type="SUPFAM" id="SSF53244">
    <property type="entry name" value="MurD-like peptide ligases, peptide-binding domain"/>
    <property type="match status" value="1"/>
</dbReference>
<feature type="chain" id="PRO_0000242596" description="UDP-N-acetylmuramate--L-alanine ligase">
    <location>
        <begin position="1"/>
        <end position="465"/>
    </location>
</feature>
<feature type="binding site" evidence="1">
    <location>
        <begin position="118"/>
        <end position="124"/>
    </location>
    <ligand>
        <name>ATP</name>
        <dbReference type="ChEBI" id="CHEBI:30616"/>
    </ligand>
</feature>
<comment type="function">
    <text evidence="1">Cell wall formation.</text>
</comment>
<comment type="catalytic activity">
    <reaction evidence="1">
        <text>UDP-N-acetyl-alpha-D-muramate + L-alanine + ATP = UDP-N-acetyl-alpha-D-muramoyl-L-alanine + ADP + phosphate + H(+)</text>
        <dbReference type="Rhea" id="RHEA:23372"/>
        <dbReference type="ChEBI" id="CHEBI:15378"/>
        <dbReference type="ChEBI" id="CHEBI:30616"/>
        <dbReference type="ChEBI" id="CHEBI:43474"/>
        <dbReference type="ChEBI" id="CHEBI:57972"/>
        <dbReference type="ChEBI" id="CHEBI:70757"/>
        <dbReference type="ChEBI" id="CHEBI:83898"/>
        <dbReference type="ChEBI" id="CHEBI:456216"/>
        <dbReference type="EC" id="6.3.2.8"/>
    </reaction>
</comment>
<comment type="pathway">
    <text evidence="1">Cell wall biogenesis; peptidoglycan biosynthesis.</text>
</comment>
<comment type="subcellular location">
    <subcellularLocation>
        <location evidence="1">Cytoplasm</location>
    </subcellularLocation>
</comment>
<comment type="similarity">
    <text evidence="1">Belongs to the MurCDEF family.</text>
</comment>
<sequence>MTPATKLPQDVGPIHFVGIGGIGMSGIAEVLLNLGYRVQGSDLKGSKITERLAGLGAEIFEGQRAENLDGAAVVVISSAIKPGNPELDGARAQGLPVVRRADMLAELMRLKSNIAIAGTHGKTTTTTMMAELMVAGGFDPTVINGGIIHAYSSNARMGQGEWMVVEADESDGSFNRLPATVAIVTNIDPEHMEHWGSIEALRQGFYDFVSNIPFYGIAVCCTDHAEVQALVGRITDRRVRTYGFNAQADVRATNLTYKGGVAHFDILLQHEDMVIEGCTLPMPGDHNVSNALSAVAVARHLGMKADEIRAALAAFGGVNRRFTKVGEVNGVTIIDDYGHHPVEIAAVLKAARQASEGRVIAVHQPHRYSRLSNLFDDFCACFNEADVVAIAEVYAAGEAPIPGADRDALVAGLIRHGHRHARAILSEEDLERLVREQTRPGDMVVCLGAGTISAWANGLPDRLKG</sequence>
<evidence type="ECO:0000255" key="1">
    <source>
        <dbReference type="HAMAP-Rule" id="MF_00046"/>
    </source>
</evidence>